<reference key="1">
    <citation type="journal article" date="2005" name="Science">
        <title>The transcriptional landscape of the mammalian genome.</title>
        <authorList>
            <person name="Carninci P."/>
            <person name="Kasukawa T."/>
            <person name="Katayama S."/>
            <person name="Gough J."/>
            <person name="Frith M.C."/>
            <person name="Maeda N."/>
            <person name="Oyama R."/>
            <person name="Ravasi T."/>
            <person name="Lenhard B."/>
            <person name="Wells C."/>
            <person name="Kodzius R."/>
            <person name="Shimokawa K."/>
            <person name="Bajic V.B."/>
            <person name="Brenner S.E."/>
            <person name="Batalov S."/>
            <person name="Forrest A.R."/>
            <person name="Zavolan M."/>
            <person name="Davis M.J."/>
            <person name="Wilming L.G."/>
            <person name="Aidinis V."/>
            <person name="Allen J.E."/>
            <person name="Ambesi-Impiombato A."/>
            <person name="Apweiler R."/>
            <person name="Aturaliya R.N."/>
            <person name="Bailey T.L."/>
            <person name="Bansal M."/>
            <person name="Baxter L."/>
            <person name="Beisel K.W."/>
            <person name="Bersano T."/>
            <person name="Bono H."/>
            <person name="Chalk A.M."/>
            <person name="Chiu K.P."/>
            <person name="Choudhary V."/>
            <person name="Christoffels A."/>
            <person name="Clutterbuck D.R."/>
            <person name="Crowe M.L."/>
            <person name="Dalla E."/>
            <person name="Dalrymple B.P."/>
            <person name="de Bono B."/>
            <person name="Della Gatta G."/>
            <person name="di Bernardo D."/>
            <person name="Down T."/>
            <person name="Engstrom P."/>
            <person name="Fagiolini M."/>
            <person name="Faulkner G."/>
            <person name="Fletcher C.F."/>
            <person name="Fukushima T."/>
            <person name="Furuno M."/>
            <person name="Futaki S."/>
            <person name="Gariboldi M."/>
            <person name="Georgii-Hemming P."/>
            <person name="Gingeras T.R."/>
            <person name="Gojobori T."/>
            <person name="Green R.E."/>
            <person name="Gustincich S."/>
            <person name="Harbers M."/>
            <person name="Hayashi Y."/>
            <person name="Hensch T.K."/>
            <person name="Hirokawa N."/>
            <person name="Hill D."/>
            <person name="Huminiecki L."/>
            <person name="Iacono M."/>
            <person name="Ikeo K."/>
            <person name="Iwama A."/>
            <person name="Ishikawa T."/>
            <person name="Jakt M."/>
            <person name="Kanapin A."/>
            <person name="Katoh M."/>
            <person name="Kawasawa Y."/>
            <person name="Kelso J."/>
            <person name="Kitamura H."/>
            <person name="Kitano H."/>
            <person name="Kollias G."/>
            <person name="Krishnan S.P."/>
            <person name="Kruger A."/>
            <person name="Kummerfeld S.K."/>
            <person name="Kurochkin I.V."/>
            <person name="Lareau L.F."/>
            <person name="Lazarevic D."/>
            <person name="Lipovich L."/>
            <person name="Liu J."/>
            <person name="Liuni S."/>
            <person name="McWilliam S."/>
            <person name="Madan Babu M."/>
            <person name="Madera M."/>
            <person name="Marchionni L."/>
            <person name="Matsuda H."/>
            <person name="Matsuzawa S."/>
            <person name="Miki H."/>
            <person name="Mignone F."/>
            <person name="Miyake S."/>
            <person name="Morris K."/>
            <person name="Mottagui-Tabar S."/>
            <person name="Mulder N."/>
            <person name="Nakano N."/>
            <person name="Nakauchi H."/>
            <person name="Ng P."/>
            <person name="Nilsson R."/>
            <person name="Nishiguchi S."/>
            <person name="Nishikawa S."/>
            <person name="Nori F."/>
            <person name="Ohara O."/>
            <person name="Okazaki Y."/>
            <person name="Orlando V."/>
            <person name="Pang K.C."/>
            <person name="Pavan W.J."/>
            <person name="Pavesi G."/>
            <person name="Pesole G."/>
            <person name="Petrovsky N."/>
            <person name="Piazza S."/>
            <person name="Reed J."/>
            <person name="Reid J.F."/>
            <person name="Ring B.Z."/>
            <person name="Ringwald M."/>
            <person name="Rost B."/>
            <person name="Ruan Y."/>
            <person name="Salzberg S.L."/>
            <person name="Sandelin A."/>
            <person name="Schneider C."/>
            <person name="Schoenbach C."/>
            <person name="Sekiguchi K."/>
            <person name="Semple C.A."/>
            <person name="Seno S."/>
            <person name="Sessa L."/>
            <person name="Sheng Y."/>
            <person name="Shibata Y."/>
            <person name="Shimada H."/>
            <person name="Shimada K."/>
            <person name="Silva D."/>
            <person name="Sinclair B."/>
            <person name="Sperling S."/>
            <person name="Stupka E."/>
            <person name="Sugiura K."/>
            <person name="Sultana R."/>
            <person name="Takenaka Y."/>
            <person name="Taki K."/>
            <person name="Tammoja K."/>
            <person name="Tan S.L."/>
            <person name="Tang S."/>
            <person name="Taylor M.S."/>
            <person name="Tegner J."/>
            <person name="Teichmann S.A."/>
            <person name="Ueda H.R."/>
            <person name="van Nimwegen E."/>
            <person name="Verardo R."/>
            <person name="Wei C.L."/>
            <person name="Yagi K."/>
            <person name="Yamanishi H."/>
            <person name="Zabarovsky E."/>
            <person name="Zhu S."/>
            <person name="Zimmer A."/>
            <person name="Hide W."/>
            <person name="Bult C."/>
            <person name="Grimmond S.M."/>
            <person name="Teasdale R.D."/>
            <person name="Liu E.T."/>
            <person name="Brusic V."/>
            <person name="Quackenbush J."/>
            <person name="Wahlestedt C."/>
            <person name="Mattick J.S."/>
            <person name="Hume D.A."/>
            <person name="Kai C."/>
            <person name="Sasaki D."/>
            <person name="Tomaru Y."/>
            <person name="Fukuda S."/>
            <person name="Kanamori-Katayama M."/>
            <person name="Suzuki M."/>
            <person name="Aoki J."/>
            <person name="Arakawa T."/>
            <person name="Iida J."/>
            <person name="Imamura K."/>
            <person name="Itoh M."/>
            <person name="Kato T."/>
            <person name="Kawaji H."/>
            <person name="Kawagashira N."/>
            <person name="Kawashima T."/>
            <person name="Kojima M."/>
            <person name="Kondo S."/>
            <person name="Konno H."/>
            <person name="Nakano K."/>
            <person name="Ninomiya N."/>
            <person name="Nishio T."/>
            <person name="Okada M."/>
            <person name="Plessy C."/>
            <person name="Shibata K."/>
            <person name="Shiraki T."/>
            <person name="Suzuki S."/>
            <person name="Tagami M."/>
            <person name="Waki K."/>
            <person name="Watahiki A."/>
            <person name="Okamura-Oho Y."/>
            <person name="Suzuki H."/>
            <person name="Kawai J."/>
            <person name="Hayashizaki Y."/>
        </authorList>
    </citation>
    <scope>NUCLEOTIDE SEQUENCE [LARGE SCALE MRNA]</scope>
    <source>
        <strain>C57BL/6J</strain>
        <tissue>Bone marrow</tissue>
        <tissue>Eye</tissue>
        <tissue>Kidney</tissue>
        <tissue>Olfactory bulb</tissue>
        <tissue>Skin</tissue>
    </source>
</reference>
<reference key="2">
    <citation type="journal article" date="2004" name="Genome Res.">
        <title>The status, quality, and expansion of the NIH full-length cDNA project: the Mammalian Gene Collection (MGC).</title>
        <authorList>
            <consortium name="The MGC Project Team"/>
        </authorList>
    </citation>
    <scope>NUCLEOTIDE SEQUENCE [LARGE SCALE MRNA]</scope>
    <source>
        <strain>FVB/N</strain>
        <tissue>Mammary tumor</tissue>
        <tissue>Olfactory epithelium</tissue>
    </source>
</reference>
<reference key="3">
    <citation type="journal article" date="2004" name="Mol. Cell. Proteomics">
        <title>Phosphoproteomic analysis of the developing mouse brain.</title>
        <authorList>
            <person name="Ballif B.A."/>
            <person name="Villen J."/>
            <person name="Beausoleil S.A."/>
            <person name="Schwartz D."/>
            <person name="Gygi S.P."/>
        </authorList>
    </citation>
    <scope>IDENTIFICATION BY MASS SPECTROMETRY [LARGE SCALE ANALYSIS]</scope>
    <source>
        <tissue>Embryonic brain</tissue>
    </source>
</reference>
<reference key="4">
    <citation type="journal article" date="2007" name="J. Proteome Res.">
        <title>A differential phosphoproteomic analysis of retinoic acid-treated P19 cells.</title>
        <authorList>
            <person name="Smith J.C."/>
            <person name="Duchesne M.A."/>
            <person name="Tozzi P."/>
            <person name="Ethier M."/>
            <person name="Figeys D."/>
        </authorList>
    </citation>
    <scope>IDENTIFICATION BY MASS SPECTROMETRY [LARGE SCALE ANALYSIS]</scope>
    <source>
        <tissue>Teratocarcinoma</tissue>
    </source>
</reference>
<reference key="5">
    <citation type="journal article" date="2007" name="Proc. Natl. Acad. Sci. U.S.A.">
        <title>Large-scale phosphorylation analysis of mouse liver.</title>
        <authorList>
            <person name="Villen J."/>
            <person name="Beausoleil S.A."/>
            <person name="Gerber S.A."/>
            <person name="Gygi S.P."/>
        </authorList>
    </citation>
    <scope>PHOSPHORYLATION [LARGE SCALE ANALYSIS] AT SER-122 AND SER-123</scope>
    <scope>IDENTIFICATION BY MASS SPECTROMETRY [LARGE SCALE ANALYSIS]</scope>
    <source>
        <tissue>Liver</tissue>
    </source>
</reference>
<reference key="6">
    <citation type="journal article" date="2009" name="Immunity">
        <title>The phagosomal proteome in interferon-gamma-activated macrophages.</title>
        <authorList>
            <person name="Trost M."/>
            <person name="English L."/>
            <person name="Lemieux S."/>
            <person name="Courcelles M."/>
            <person name="Desjardins M."/>
            <person name="Thibault P."/>
        </authorList>
    </citation>
    <scope>IDENTIFICATION BY MASS SPECTROMETRY [LARGE SCALE ANALYSIS]</scope>
</reference>
<reference key="7">
    <citation type="journal article" date="2009" name="Mol. Cell. Proteomics">
        <title>Large scale localization of protein phosphorylation by use of electron capture dissociation mass spectrometry.</title>
        <authorList>
            <person name="Sweet S.M."/>
            <person name="Bailey C.M."/>
            <person name="Cunningham D.L."/>
            <person name="Heath J.K."/>
            <person name="Cooper H.J."/>
        </authorList>
    </citation>
    <scope>PHOSPHORYLATION [LARGE SCALE ANALYSIS] AT SER-122 AND SER-123</scope>
    <scope>IDENTIFICATION BY MASS SPECTROMETRY [LARGE SCALE ANALYSIS]</scope>
    <source>
        <tissue>Embryonic fibroblast</tissue>
    </source>
</reference>
<reference key="8">
    <citation type="journal article" date="2010" name="Cell">
        <title>A tissue-specific atlas of mouse protein phosphorylation and expression.</title>
        <authorList>
            <person name="Huttlin E.L."/>
            <person name="Jedrychowski M.P."/>
            <person name="Elias J.E."/>
            <person name="Goswami T."/>
            <person name="Rad R."/>
            <person name="Beausoleil S.A."/>
            <person name="Villen J."/>
            <person name="Haas W."/>
            <person name="Sowa M.E."/>
            <person name="Gygi S.P."/>
        </authorList>
    </citation>
    <scope>PHOSPHORYLATION [LARGE SCALE ANALYSIS] AT THR-74; SER-88; SER-90; THR-97; THR-117; SER-122; SER-123 AND SER-131</scope>
    <scope>IDENTIFICATION BY MASS SPECTROMETRY [LARGE SCALE ANALYSIS]</scope>
    <source>
        <tissue>Brain</tissue>
        <tissue>Brown adipose tissue</tissue>
        <tissue>Heart</tissue>
        <tissue>Kidney</tissue>
        <tissue>Liver</tissue>
        <tissue>Lung</tissue>
        <tissue>Pancreas</tissue>
        <tissue>Spleen</tissue>
        <tissue>Testis</tissue>
    </source>
</reference>
<reference key="9">
    <citation type="journal article" date="2007" name="J. Biol. Chem.">
        <title>Structural basis for regulation of protein phosphatase 1 by inhibitor-2.</title>
        <authorList>
            <person name="Hurley T.D."/>
            <person name="Yang J."/>
            <person name="Zhang L."/>
            <person name="Goodwin K.D."/>
            <person name="Zou Q."/>
            <person name="Cortese M."/>
            <person name="Dunker A.K."/>
            <person name="DePaoli-Roach A.A."/>
        </authorList>
    </citation>
    <scope>X-RAY CRYSTALLOGRAPHY (2.5 ANGSTROMS) IN COMPLEX WITH R.NORVEGICUS PPP1CC</scope>
</reference>
<accession>Q9DCL8</accession>
<accession>Q3UD25</accession>
<accession>Q8C1A6</accession>
<dbReference type="EMBL" id="AK002671">
    <property type="protein sequence ID" value="BAB22274.1"/>
    <property type="molecule type" value="mRNA"/>
</dbReference>
<dbReference type="EMBL" id="AK028603">
    <property type="protein sequence ID" value="BAC26028.1"/>
    <property type="molecule type" value="mRNA"/>
</dbReference>
<dbReference type="EMBL" id="AK032462">
    <property type="protein sequence ID" value="BAC27882.1"/>
    <property type="molecule type" value="mRNA"/>
</dbReference>
<dbReference type="EMBL" id="AK053657">
    <property type="protein sequence ID" value="BAC35465.1"/>
    <property type="molecule type" value="mRNA"/>
</dbReference>
<dbReference type="EMBL" id="AK150281">
    <property type="protein sequence ID" value="BAE29437.1"/>
    <property type="molecule type" value="mRNA"/>
</dbReference>
<dbReference type="EMBL" id="BC069885">
    <property type="protein sequence ID" value="AAH69885.1"/>
    <property type="molecule type" value="mRNA"/>
</dbReference>
<dbReference type="EMBL" id="BC069886">
    <property type="protein sequence ID" value="AAH69886.1"/>
    <property type="molecule type" value="mRNA"/>
</dbReference>
<dbReference type="CCDS" id="CCDS28104.1"/>
<dbReference type="RefSeq" id="NP_080076.1">
    <property type="nucleotide sequence ID" value="NM_025800.3"/>
</dbReference>
<dbReference type="PDB" id="2O8A">
    <property type="method" value="X-ray"/>
    <property type="resolution" value="2.61 A"/>
    <property type="chains" value="I/J=1-206"/>
</dbReference>
<dbReference type="PDB" id="2O8G">
    <property type="method" value="X-ray"/>
    <property type="resolution" value="2.50 A"/>
    <property type="chains" value="I/J=1-206"/>
</dbReference>
<dbReference type="PDBsum" id="2O8A"/>
<dbReference type="PDBsum" id="2O8G"/>
<dbReference type="SMR" id="Q9DCL8"/>
<dbReference type="BioGRID" id="211762">
    <property type="interactions" value="26"/>
</dbReference>
<dbReference type="ELM" id="Q9DCL8"/>
<dbReference type="FunCoup" id="Q9DCL8">
    <property type="interactions" value="566"/>
</dbReference>
<dbReference type="IntAct" id="Q9DCL8">
    <property type="interactions" value="2"/>
</dbReference>
<dbReference type="STRING" id="10090.ENSMUSP00000060118"/>
<dbReference type="iPTMnet" id="Q9DCL8"/>
<dbReference type="PhosphoSitePlus" id="Q9DCL8"/>
<dbReference type="jPOST" id="Q9DCL8"/>
<dbReference type="PaxDb" id="10090-ENSMUSP00000060118"/>
<dbReference type="PeptideAtlas" id="Q9DCL8"/>
<dbReference type="ProteomicsDB" id="268984"/>
<dbReference type="Pumba" id="Q9DCL8"/>
<dbReference type="DNASU" id="66849"/>
<dbReference type="Ensembl" id="ENSMUST00000060188.14">
    <property type="protein sequence ID" value="ENSMUSP00000060118.8"/>
    <property type="gene ID" value="ENSMUSG00000047714.15"/>
</dbReference>
<dbReference type="GeneID" id="66849"/>
<dbReference type="KEGG" id="mmu:66849"/>
<dbReference type="UCSC" id="uc007yxd.1">
    <property type="organism name" value="mouse"/>
</dbReference>
<dbReference type="AGR" id="MGI:1914099"/>
<dbReference type="CTD" id="5504"/>
<dbReference type="MGI" id="MGI:1914099">
    <property type="gene designation" value="Ppp1r2"/>
</dbReference>
<dbReference type="VEuPathDB" id="HostDB:ENSMUSG00000047714"/>
<dbReference type="eggNOG" id="KOG4041">
    <property type="taxonomic scope" value="Eukaryota"/>
</dbReference>
<dbReference type="GeneTree" id="ENSGT00390000004757"/>
<dbReference type="InParanoid" id="Q9DCL8"/>
<dbReference type="OMA" id="GHYREWH"/>
<dbReference type="OrthoDB" id="551302at2759"/>
<dbReference type="PhylomeDB" id="Q9DCL8"/>
<dbReference type="TreeFam" id="TF105536"/>
<dbReference type="BioGRID-ORCS" id="66849">
    <property type="hits" value="15 hits in 78 CRISPR screens"/>
</dbReference>
<dbReference type="ChiTaRS" id="Ppp1r2">
    <property type="organism name" value="mouse"/>
</dbReference>
<dbReference type="EvolutionaryTrace" id="Q9DCL8"/>
<dbReference type="PRO" id="PR:Q9DCL8"/>
<dbReference type="Proteomes" id="UP000000589">
    <property type="component" value="Chromosome 16"/>
</dbReference>
<dbReference type="RNAct" id="Q9DCL8">
    <property type="molecule type" value="protein"/>
</dbReference>
<dbReference type="Bgee" id="ENSMUSG00000047714">
    <property type="expression patterns" value="Expressed in granulocyte and 255 other cell types or tissues"/>
</dbReference>
<dbReference type="ExpressionAtlas" id="Q9DCL8">
    <property type="expression patterns" value="baseline and differential"/>
</dbReference>
<dbReference type="GO" id="GO:0140678">
    <property type="term" value="F:molecular function inhibitor activity"/>
    <property type="evidence" value="ECO:0000269"/>
    <property type="project" value="DisProt"/>
</dbReference>
<dbReference type="GO" id="GO:0004864">
    <property type="term" value="F:protein phosphatase inhibitor activity"/>
    <property type="evidence" value="ECO:0007669"/>
    <property type="project" value="UniProtKB-KW"/>
</dbReference>
<dbReference type="GO" id="GO:0005977">
    <property type="term" value="P:glycogen metabolic process"/>
    <property type="evidence" value="ECO:0007669"/>
    <property type="project" value="UniProtKB-KW"/>
</dbReference>
<dbReference type="GO" id="GO:0009966">
    <property type="term" value="P:regulation of signal transduction"/>
    <property type="evidence" value="ECO:0007669"/>
    <property type="project" value="InterPro"/>
</dbReference>
<dbReference type="DisProt" id="DP00815"/>
<dbReference type="Gene3D" id="6.10.250.1050">
    <property type="match status" value="2"/>
</dbReference>
<dbReference type="InterPro" id="IPR007062">
    <property type="entry name" value="PPI-2"/>
</dbReference>
<dbReference type="PANTHER" id="PTHR12398">
    <property type="entry name" value="PROTEIN PHOSPHATASE INHIBITOR"/>
    <property type="match status" value="1"/>
</dbReference>
<dbReference type="PANTHER" id="PTHR12398:SF35">
    <property type="entry name" value="PROTEIN PHOSPHATASE INHIBITOR 2-RELATED"/>
    <property type="match status" value="1"/>
</dbReference>
<dbReference type="Pfam" id="PF04979">
    <property type="entry name" value="IPP-2"/>
    <property type="match status" value="1"/>
</dbReference>
<name>IPP2_MOUSE</name>
<feature type="initiator methionine" description="Removed" evidence="2">
    <location>
        <position position="1"/>
    </location>
</feature>
<feature type="chain" id="PRO_0000071482" description="Protein phosphatase inhibitor 2">
    <location>
        <begin position="2"/>
        <end position="206"/>
    </location>
</feature>
<feature type="region of interest" description="Disordered" evidence="4">
    <location>
        <begin position="1"/>
        <end position="36"/>
    </location>
</feature>
<feature type="region of interest" description="Required for binding PPP1CC">
    <location>
        <begin position="12"/>
        <end position="17"/>
    </location>
</feature>
<feature type="region of interest" description="Required for binding the 'RVXF' binding groove of PPP1CC">
    <location>
        <begin position="44"/>
        <end position="56"/>
    </location>
</feature>
<feature type="region of interest" description="Disordered" evidence="4">
    <location>
        <begin position="75"/>
        <end position="143"/>
    </location>
</feature>
<feature type="region of interest" description="Required for binding PPP1CC catalytic center, displacing metal ions and inhibition of PPP1CC catalytic activity">
    <location>
        <begin position="148"/>
        <end position="151"/>
    </location>
</feature>
<feature type="region of interest" description="Disordered" evidence="4">
    <location>
        <begin position="164"/>
        <end position="206"/>
    </location>
</feature>
<feature type="compositionally biased region" description="Acidic residues" evidence="4">
    <location>
        <begin position="81"/>
        <end position="92"/>
    </location>
</feature>
<feature type="compositionally biased region" description="Basic and acidic residues" evidence="4">
    <location>
        <begin position="111"/>
        <end position="121"/>
    </location>
</feature>
<feature type="compositionally biased region" description="Acidic residues" evidence="4">
    <location>
        <begin position="122"/>
        <end position="131"/>
    </location>
</feature>
<feature type="compositionally biased region" description="Basic and acidic residues" evidence="4">
    <location>
        <begin position="132"/>
        <end position="143"/>
    </location>
</feature>
<feature type="compositionally biased region" description="Acidic residues" evidence="4">
    <location>
        <begin position="168"/>
        <end position="180"/>
    </location>
</feature>
<feature type="compositionally biased region" description="Polar residues" evidence="4">
    <location>
        <begin position="186"/>
        <end position="206"/>
    </location>
</feature>
<feature type="modified residue" description="N-acetylalanine" evidence="2">
    <location>
        <position position="2"/>
    </location>
</feature>
<feature type="modified residue" description="Phosphoserine; by ATM" evidence="3">
    <location>
        <position position="45"/>
    </location>
</feature>
<feature type="modified residue" description="Phosphothreonine" evidence="8">
    <location>
        <position position="74"/>
    </location>
</feature>
<feature type="modified residue" description="Phosphoserine" evidence="8">
    <location>
        <position position="88"/>
    </location>
</feature>
<feature type="modified residue" description="Phosphoserine" evidence="8">
    <location>
        <position position="90"/>
    </location>
</feature>
<feature type="modified residue" description="Phosphothreonine" evidence="8">
    <location>
        <position position="97"/>
    </location>
</feature>
<feature type="modified residue" description="Phosphothreonine" evidence="8">
    <location>
        <position position="117"/>
    </location>
</feature>
<feature type="modified residue" description="Phosphoserine" evidence="6 7 8">
    <location>
        <position position="122"/>
    </location>
</feature>
<feature type="modified residue" description="Phosphoserine" evidence="6 7 8">
    <location>
        <position position="123"/>
    </location>
</feature>
<feature type="modified residue" description="Phosphoserine" evidence="8">
    <location>
        <position position="131"/>
    </location>
</feature>
<feature type="sequence conflict" description="In Ref. 1; BAC26028." evidence="5" ref="1">
    <original>S</original>
    <variation>C</variation>
    <location>
        <position position="193"/>
    </location>
</feature>
<feature type="helix" evidence="9">
    <location>
        <begin position="50"/>
        <end position="55"/>
    </location>
</feature>
<feature type="helix" evidence="9">
    <location>
        <begin position="132"/>
        <end position="148"/>
    </location>
</feature>
<feature type="helix" evidence="9">
    <location>
        <begin position="151"/>
        <end position="154"/>
    </location>
</feature>
<feature type="helix" evidence="9">
    <location>
        <begin position="155"/>
        <end position="166"/>
    </location>
</feature>
<comment type="function">
    <text evidence="1">Inhibitor of protein-phosphatase 1.</text>
</comment>
<comment type="subunit">
    <text evidence="1">Heterodimer with PP1.</text>
</comment>
<comment type="PTM">
    <text evidence="1">Phosphorylation on Ser-45 by ATM activates PP1 by dissociating the PP1-PPP1R2 complex. Phosphorylation on Thr-74 by GSK3 activates PP1 by dissociating the PP1-PPP1R2 complex.</text>
</comment>
<comment type="similarity">
    <text evidence="5">Belongs to the protein phosphatase inhibitor 2 family.</text>
</comment>
<keyword id="KW-0002">3D-structure</keyword>
<keyword id="KW-0007">Acetylation</keyword>
<keyword id="KW-0119">Carbohydrate metabolism</keyword>
<keyword id="KW-0321">Glycogen metabolism</keyword>
<keyword id="KW-0597">Phosphoprotein</keyword>
<keyword id="KW-0650">Protein phosphatase inhibitor</keyword>
<keyword id="KW-1185">Reference proteome</keyword>
<protein>
    <recommendedName>
        <fullName>Protein phosphatase inhibitor 2</fullName>
        <shortName>IPP-2</shortName>
    </recommendedName>
</protein>
<evidence type="ECO:0000250" key="1"/>
<evidence type="ECO:0000250" key="2">
    <source>
        <dbReference type="UniProtKB" id="P11845"/>
    </source>
</evidence>
<evidence type="ECO:0000250" key="3">
    <source>
        <dbReference type="UniProtKB" id="P41236"/>
    </source>
</evidence>
<evidence type="ECO:0000256" key="4">
    <source>
        <dbReference type="SAM" id="MobiDB-lite"/>
    </source>
</evidence>
<evidence type="ECO:0000305" key="5"/>
<evidence type="ECO:0007744" key="6">
    <source>
    </source>
</evidence>
<evidence type="ECO:0007744" key="7">
    <source>
    </source>
</evidence>
<evidence type="ECO:0007744" key="8">
    <source>
    </source>
</evidence>
<evidence type="ECO:0007829" key="9">
    <source>
        <dbReference type="PDB" id="2O8G"/>
    </source>
</evidence>
<proteinExistence type="evidence at protein level"/>
<sequence length="206" mass="23119">MAASTASHRPIKGILKNKTSAASPPVVPSAEQPRPIVEEELSKKSQKWDEMNILATYHPADKDYGLMKIDEPNTPYHNMIGDDEDAYSDSEGNEVMTPDILAKKLAAAEGSEPKYRTREQESSGEEDNDLSPEEREKKRQFEMKRKLHYNEGLNIKLARQLISKDLHDDDEDEEMAETADGDSMNVEESSQGSTTSDHLQHKSQSS</sequence>
<organism>
    <name type="scientific">Mus musculus</name>
    <name type="common">Mouse</name>
    <dbReference type="NCBI Taxonomy" id="10090"/>
    <lineage>
        <taxon>Eukaryota</taxon>
        <taxon>Metazoa</taxon>
        <taxon>Chordata</taxon>
        <taxon>Craniata</taxon>
        <taxon>Vertebrata</taxon>
        <taxon>Euteleostomi</taxon>
        <taxon>Mammalia</taxon>
        <taxon>Eutheria</taxon>
        <taxon>Euarchontoglires</taxon>
        <taxon>Glires</taxon>
        <taxon>Rodentia</taxon>
        <taxon>Myomorpha</taxon>
        <taxon>Muroidea</taxon>
        <taxon>Muridae</taxon>
        <taxon>Murinae</taxon>
        <taxon>Mus</taxon>
        <taxon>Mus</taxon>
    </lineage>
</organism>
<gene>
    <name type="primary">Ppp1r2</name>
</gene>